<name>IL13_MACMU</name>
<gene>
    <name type="primary">IL13</name>
</gene>
<accession>Q864V6</accession>
<protein>
    <recommendedName>
        <fullName>Interleukin-13</fullName>
        <shortName>IL-13</shortName>
    </recommendedName>
</protein>
<proteinExistence type="evidence at transcript level"/>
<comment type="function">
    <text evidence="2 3 4">Cytokine that plays important roles in allergic inflammation and immune response to parasite infection. Synergizes with IL2 in regulating interferon-gamma synthesis. Stimulates B-cell proliferation, and activation of eosinophils, basophils, and mast cells (By similarity). Plays an important role in controlling IL33 activity by modulating the production of transmembrane and soluble forms of interleukin-1 receptor-like 1/IL1RL1 (By similarity). Displays the capacity to antagonize Th1-driven proinflammatory immune response and downregulates synthesis of many proinflammatory cytokines including IL1, IL6, IL10, IL12 and TNF-alpha through a mechanism that partially involves suppression of NF-kappa-B (By similarity). Also functions on nonhematopoietic cells, including endothelial cells where it induces vascular cell adhesion protein 1/VCAM1, which is important in the recruitment of eosinophils. Exerts its biological effects through its receptors which comprises the IL4R chain and the IL13RA1 chain, to activate JAK1 and TYK2, leading to the activation of STAT6. Aside from IL13RA1, another receptor IL13RA2 acts as a high affinity decoy for IL13 and mediates internalization and depletion of extracellular IL13 (By similarity).</text>
</comment>
<comment type="subunit">
    <text evidence="1">Interacts with IL13RA2.</text>
</comment>
<comment type="subcellular location">
    <subcellularLocation>
        <location evidence="1">Secreted</location>
    </subcellularLocation>
</comment>
<comment type="similarity">
    <text evidence="6">Belongs to the IL-4/IL-13 family.</text>
</comment>
<dbReference type="EMBL" id="AY244790">
    <property type="protein sequence ID" value="AAO89232.1"/>
    <property type="molecule type" value="mRNA"/>
</dbReference>
<dbReference type="RefSeq" id="NP_001028101.1">
    <property type="nucleotide sequence ID" value="NM_001032929.1"/>
</dbReference>
<dbReference type="SMR" id="Q864V6"/>
<dbReference type="STRING" id="9544.ENSMMUP00000004185"/>
<dbReference type="GlyCosmos" id="Q864V6">
    <property type="glycosylation" value="4 sites, No reported glycans"/>
</dbReference>
<dbReference type="GeneID" id="574325"/>
<dbReference type="KEGG" id="mcc:574325"/>
<dbReference type="CTD" id="3596"/>
<dbReference type="InParanoid" id="Q864V6"/>
<dbReference type="OrthoDB" id="9447464at2759"/>
<dbReference type="Proteomes" id="UP000006718">
    <property type="component" value="Unassembled WGS sequence"/>
</dbReference>
<dbReference type="GO" id="GO:0005615">
    <property type="term" value="C:extracellular space"/>
    <property type="evidence" value="ECO:0000318"/>
    <property type="project" value="GO_Central"/>
</dbReference>
<dbReference type="GO" id="GO:0005125">
    <property type="term" value="F:cytokine activity"/>
    <property type="evidence" value="ECO:0007669"/>
    <property type="project" value="UniProtKB-KW"/>
</dbReference>
<dbReference type="GO" id="GO:0005144">
    <property type="term" value="F:interleukin-13 receptor binding"/>
    <property type="evidence" value="ECO:0000318"/>
    <property type="project" value="GO_Central"/>
</dbReference>
<dbReference type="GO" id="GO:0006955">
    <property type="term" value="P:immune response"/>
    <property type="evidence" value="ECO:0007669"/>
    <property type="project" value="InterPro"/>
</dbReference>
<dbReference type="GO" id="GO:0006954">
    <property type="term" value="P:inflammatory response"/>
    <property type="evidence" value="ECO:0000318"/>
    <property type="project" value="GO_Central"/>
</dbReference>
<dbReference type="GO" id="GO:0002639">
    <property type="term" value="P:positive regulation of immunoglobulin production"/>
    <property type="evidence" value="ECO:0000318"/>
    <property type="project" value="GO_Central"/>
</dbReference>
<dbReference type="FunFam" id="1.20.1250.10:FF:000029">
    <property type="entry name" value="Interleukin-13"/>
    <property type="match status" value="1"/>
</dbReference>
<dbReference type="Gene3D" id="1.20.1250.10">
    <property type="match status" value="1"/>
</dbReference>
<dbReference type="InterPro" id="IPR009079">
    <property type="entry name" value="4_helix_cytokine-like_core"/>
</dbReference>
<dbReference type="InterPro" id="IPR020470">
    <property type="entry name" value="IL-13"/>
</dbReference>
<dbReference type="InterPro" id="IPR001325">
    <property type="entry name" value="IL-4/IL-13"/>
</dbReference>
<dbReference type="InterPro" id="IPR018096">
    <property type="entry name" value="IL-4/IL-13_CS"/>
</dbReference>
<dbReference type="PANTHER" id="PTHR48486">
    <property type="entry name" value="INTERLEUKIN-13"/>
    <property type="match status" value="1"/>
</dbReference>
<dbReference type="PANTHER" id="PTHR48486:SF1">
    <property type="entry name" value="INTERLEUKIN-13"/>
    <property type="match status" value="1"/>
</dbReference>
<dbReference type="Pfam" id="PF03487">
    <property type="entry name" value="IL13"/>
    <property type="match status" value="1"/>
</dbReference>
<dbReference type="PRINTS" id="PR01929">
    <property type="entry name" value="INTRLEUKIN13"/>
</dbReference>
<dbReference type="SMART" id="SM00190">
    <property type="entry name" value="IL4_13"/>
    <property type="match status" value="1"/>
</dbReference>
<dbReference type="SUPFAM" id="SSF47266">
    <property type="entry name" value="4-helical cytokines"/>
    <property type="match status" value="1"/>
</dbReference>
<dbReference type="PROSITE" id="PS00838">
    <property type="entry name" value="INTERLEUKIN_4_13"/>
    <property type="match status" value="1"/>
</dbReference>
<reference key="1">
    <citation type="submission" date="2003-02" db="EMBL/GenBank/DDBJ databases">
        <authorList>
            <person name="Patel M."/>
            <person name="An Z."/>
        </authorList>
    </citation>
    <scope>NUCLEOTIDE SEQUENCE [MRNA]</scope>
</reference>
<feature type="signal peptide" evidence="5">
    <location>
        <begin position="1"/>
        <end position="18"/>
    </location>
</feature>
<feature type="chain" id="PRO_0000045860" description="Interleukin-13">
    <location>
        <begin position="19"/>
        <end position="132"/>
    </location>
</feature>
<feature type="glycosylation site" description="N-linked (GlcNAc...) asparagine" evidence="5">
    <location>
        <position position="38"/>
    </location>
</feature>
<feature type="glycosylation site" description="N-linked (GlcNAc...) asparagine" evidence="5">
    <location>
        <position position="49"/>
    </location>
</feature>
<feature type="glycosylation site" description="N-linked (GlcNAc...) asparagine" evidence="5">
    <location>
        <position position="57"/>
    </location>
</feature>
<feature type="glycosylation site" description="N-linked (GlcNAc...) asparagine" evidence="5">
    <location>
        <position position="72"/>
    </location>
</feature>
<feature type="disulfide bond" evidence="3">
    <location>
        <begin position="48"/>
        <end position="76"/>
    </location>
</feature>
<feature type="disulfide bond" evidence="3">
    <location>
        <begin position="64"/>
        <end position="90"/>
    </location>
</feature>
<sequence length="132" mass="14380">MALLLTTVIALTCLGGFASPSPVPRSTALKELIEELVNITQNQKAPLCNGSMVWSINLTAGVYCAALESLINVSGCSAIEKTQRMLNGFCPHKVSAGQFSSLRVRDTKIEVAQFVKDLLVHLKKLFREGRFN</sequence>
<organism>
    <name type="scientific">Macaca mulatta</name>
    <name type="common">Rhesus macaque</name>
    <dbReference type="NCBI Taxonomy" id="9544"/>
    <lineage>
        <taxon>Eukaryota</taxon>
        <taxon>Metazoa</taxon>
        <taxon>Chordata</taxon>
        <taxon>Craniata</taxon>
        <taxon>Vertebrata</taxon>
        <taxon>Euteleostomi</taxon>
        <taxon>Mammalia</taxon>
        <taxon>Eutheria</taxon>
        <taxon>Euarchontoglires</taxon>
        <taxon>Primates</taxon>
        <taxon>Haplorrhini</taxon>
        <taxon>Catarrhini</taxon>
        <taxon>Cercopithecidae</taxon>
        <taxon>Cercopithecinae</taxon>
        <taxon>Macaca</taxon>
    </lineage>
</organism>
<keyword id="KW-0202">Cytokine</keyword>
<keyword id="KW-1015">Disulfide bond</keyword>
<keyword id="KW-0325">Glycoprotein</keyword>
<keyword id="KW-1185">Reference proteome</keyword>
<keyword id="KW-0964">Secreted</keyword>
<keyword id="KW-0732">Signal</keyword>
<evidence type="ECO:0000250" key="1"/>
<evidence type="ECO:0000250" key="2">
    <source>
        <dbReference type="UniProtKB" id="P20109"/>
    </source>
</evidence>
<evidence type="ECO:0000250" key="3">
    <source>
        <dbReference type="UniProtKB" id="P35225"/>
    </source>
</evidence>
<evidence type="ECO:0000250" key="4">
    <source>
        <dbReference type="UniProtKB" id="P42203"/>
    </source>
</evidence>
<evidence type="ECO:0000255" key="5"/>
<evidence type="ECO:0000305" key="6"/>